<name>PYRH_LEPBJ</name>
<organism>
    <name type="scientific">Leptospira borgpetersenii serovar Hardjo-bovis (strain JB197)</name>
    <dbReference type="NCBI Taxonomy" id="355277"/>
    <lineage>
        <taxon>Bacteria</taxon>
        <taxon>Pseudomonadati</taxon>
        <taxon>Spirochaetota</taxon>
        <taxon>Spirochaetia</taxon>
        <taxon>Leptospirales</taxon>
        <taxon>Leptospiraceae</taxon>
        <taxon>Leptospira</taxon>
    </lineage>
</organism>
<keyword id="KW-0067">ATP-binding</keyword>
<keyword id="KW-0963">Cytoplasm</keyword>
<keyword id="KW-0418">Kinase</keyword>
<keyword id="KW-0547">Nucleotide-binding</keyword>
<keyword id="KW-0665">Pyrimidine biosynthesis</keyword>
<keyword id="KW-0808">Transferase</keyword>
<protein>
    <recommendedName>
        <fullName evidence="1">Uridylate kinase</fullName>
        <shortName evidence="1">UK</shortName>
        <ecNumber evidence="1">2.7.4.22</ecNumber>
    </recommendedName>
    <alternativeName>
        <fullName evidence="1">Uridine monophosphate kinase</fullName>
        <shortName evidence="1">UMP kinase</shortName>
        <shortName evidence="1">UMPK</shortName>
    </alternativeName>
</protein>
<feature type="chain" id="PRO_0000323875" description="Uridylate kinase">
    <location>
        <begin position="1"/>
        <end position="246"/>
    </location>
</feature>
<feature type="binding site" evidence="1">
    <location>
        <begin position="11"/>
        <end position="14"/>
    </location>
    <ligand>
        <name>ATP</name>
        <dbReference type="ChEBI" id="CHEBI:30616"/>
    </ligand>
</feature>
<feature type="binding site" evidence="1">
    <location>
        <position position="53"/>
    </location>
    <ligand>
        <name>UMP</name>
        <dbReference type="ChEBI" id="CHEBI:57865"/>
    </ligand>
</feature>
<feature type="binding site" evidence="1">
    <location>
        <position position="54"/>
    </location>
    <ligand>
        <name>ATP</name>
        <dbReference type="ChEBI" id="CHEBI:30616"/>
    </ligand>
</feature>
<feature type="binding site" evidence="1">
    <location>
        <position position="58"/>
    </location>
    <ligand>
        <name>ATP</name>
        <dbReference type="ChEBI" id="CHEBI:30616"/>
    </ligand>
</feature>
<feature type="binding site" evidence="1">
    <location>
        <position position="73"/>
    </location>
    <ligand>
        <name>UMP</name>
        <dbReference type="ChEBI" id="CHEBI:57865"/>
    </ligand>
</feature>
<feature type="binding site" evidence="1">
    <location>
        <begin position="134"/>
        <end position="141"/>
    </location>
    <ligand>
        <name>UMP</name>
        <dbReference type="ChEBI" id="CHEBI:57865"/>
    </ligand>
</feature>
<feature type="binding site" evidence="1">
    <location>
        <position position="161"/>
    </location>
    <ligand>
        <name>ATP</name>
        <dbReference type="ChEBI" id="CHEBI:30616"/>
    </ligand>
</feature>
<feature type="binding site" evidence="1">
    <location>
        <position position="167"/>
    </location>
    <ligand>
        <name>ATP</name>
        <dbReference type="ChEBI" id="CHEBI:30616"/>
    </ligand>
</feature>
<feature type="binding site" evidence="1">
    <location>
        <position position="170"/>
    </location>
    <ligand>
        <name>ATP</name>
        <dbReference type="ChEBI" id="CHEBI:30616"/>
    </ligand>
</feature>
<dbReference type="EC" id="2.7.4.22" evidence="1"/>
<dbReference type="EMBL" id="CP000350">
    <property type="protein sequence ID" value="ABJ75550.1"/>
    <property type="molecule type" value="Genomic_DNA"/>
</dbReference>
<dbReference type="RefSeq" id="WP_002727321.1">
    <property type="nucleotide sequence ID" value="NC_008510.1"/>
</dbReference>
<dbReference type="SMR" id="Q04U70"/>
<dbReference type="GeneID" id="61173531"/>
<dbReference type="KEGG" id="lbj:LBJ_0906"/>
<dbReference type="HOGENOM" id="CLU_033861_0_0_12"/>
<dbReference type="UniPathway" id="UPA00159">
    <property type="reaction ID" value="UER00275"/>
</dbReference>
<dbReference type="Proteomes" id="UP000000656">
    <property type="component" value="Chromosome 1"/>
</dbReference>
<dbReference type="GO" id="GO:0005737">
    <property type="term" value="C:cytoplasm"/>
    <property type="evidence" value="ECO:0007669"/>
    <property type="project" value="UniProtKB-SubCell"/>
</dbReference>
<dbReference type="GO" id="GO:0005524">
    <property type="term" value="F:ATP binding"/>
    <property type="evidence" value="ECO:0007669"/>
    <property type="project" value="UniProtKB-KW"/>
</dbReference>
<dbReference type="GO" id="GO:0033862">
    <property type="term" value="F:UMP kinase activity"/>
    <property type="evidence" value="ECO:0007669"/>
    <property type="project" value="UniProtKB-EC"/>
</dbReference>
<dbReference type="GO" id="GO:0044210">
    <property type="term" value="P:'de novo' CTP biosynthetic process"/>
    <property type="evidence" value="ECO:0007669"/>
    <property type="project" value="UniProtKB-UniRule"/>
</dbReference>
<dbReference type="GO" id="GO:0006225">
    <property type="term" value="P:UDP biosynthetic process"/>
    <property type="evidence" value="ECO:0007669"/>
    <property type="project" value="TreeGrafter"/>
</dbReference>
<dbReference type="CDD" id="cd04254">
    <property type="entry name" value="AAK_UMPK-PyrH-Ec"/>
    <property type="match status" value="1"/>
</dbReference>
<dbReference type="FunFam" id="3.40.1160.10:FF:000001">
    <property type="entry name" value="Uridylate kinase"/>
    <property type="match status" value="1"/>
</dbReference>
<dbReference type="Gene3D" id="3.40.1160.10">
    <property type="entry name" value="Acetylglutamate kinase-like"/>
    <property type="match status" value="1"/>
</dbReference>
<dbReference type="HAMAP" id="MF_01220_B">
    <property type="entry name" value="PyrH_B"/>
    <property type="match status" value="1"/>
</dbReference>
<dbReference type="InterPro" id="IPR036393">
    <property type="entry name" value="AceGlu_kinase-like_sf"/>
</dbReference>
<dbReference type="InterPro" id="IPR001048">
    <property type="entry name" value="Asp/Glu/Uridylate_kinase"/>
</dbReference>
<dbReference type="InterPro" id="IPR011817">
    <property type="entry name" value="Uridylate_kinase"/>
</dbReference>
<dbReference type="InterPro" id="IPR015963">
    <property type="entry name" value="Uridylate_kinase_bac"/>
</dbReference>
<dbReference type="NCBIfam" id="TIGR02075">
    <property type="entry name" value="pyrH_bact"/>
    <property type="match status" value="1"/>
</dbReference>
<dbReference type="PANTHER" id="PTHR42833">
    <property type="entry name" value="URIDYLATE KINASE"/>
    <property type="match status" value="1"/>
</dbReference>
<dbReference type="PANTHER" id="PTHR42833:SF4">
    <property type="entry name" value="URIDYLATE KINASE PUMPKIN, CHLOROPLASTIC"/>
    <property type="match status" value="1"/>
</dbReference>
<dbReference type="Pfam" id="PF00696">
    <property type="entry name" value="AA_kinase"/>
    <property type="match status" value="1"/>
</dbReference>
<dbReference type="PIRSF" id="PIRSF005650">
    <property type="entry name" value="Uridylate_kin"/>
    <property type="match status" value="1"/>
</dbReference>
<dbReference type="SUPFAM" id="SSF53633">
    <property type="entry name" value="Carbamate kinase-like"/>
    <property type="match status" value="1"/>
</dbReference>
<proteinExistence type="inferred from homology"/>
<gene>
    <name evidence="1" type="primary">pyrH</name>
    <name type="ordered locus">LBJ_0906</name>
</gene>
<evidence type="ECO:0000255" key="1">
    <source>
        <dbReference type="HAMAP-Rule" id="MF_01220"/>
    </source>
</evidence>
<reference key="1">
    <citation type="journal article" date="2006" name="Proc. Natl. Acad. Sci. U.S.A.">
        <title>Genome reduction in Leptospira borgpetersenii reflects limited transmission potential.</title>
        <authorList>
            <person name="Bulach D.M."/>
            <person name="Zuerner R.L."/>
            <person name="Wilson P."/>
            <person name="Seemann T."/>
            <person name="McGrath A."/>
            <person name="Cullen P.A."/>
            <person name="Davis J."/>
            <person name="Johnson M."/>
            <person name="Kuczek E."/>
            <person name="Alt D.P."/>
            <person name="Peterson-Burch B."/>
            <person name="Coppel R.L."/>
            <person name="Rood J.I."/>
            <person name="Davies J.K."/>
            <person name="Adler B."/>
        </authorList>
    </citation>
    <scope>NUCLEOTIDE SEQUENCE [LARGE SCALE GENOMIC DNA]</scope>
    <source>
        <strain>JB197</strain>
    </source>
</reference>
<comment type="function">
    <text evidence="1">Catalyzes the reversible phosphorylation of UMP to UDP.</text>
</comment>
<comment type="catalytic activity">
    <reaction evidence="1">
        <text>UMP + ATP = UDP + ADP</text>
        <dbReference type="Rhea" id="RHEA:24400"/>
        <dbReference type="ChEBI" id="CHEBI:30616"/>
        <dbReference type="ChEBI" id="CHEBI:57865"/>
        <dbReference type="ChEBI" id="CHEBI:58223"/>
        <dbReference type="ChEBI" id="CHEBI:456216"/>
        <dbReference type="EC" id="2.7.4.22"/>
    </reaction>
</comment>
<comment type="activity regulation">
    <text evidence="1">Inhibited by UTP.</text>
</comment>
<comment type="pathway">
    <text evidence="1">Pyrimidine metabolism; CTP biosynthesis via de novo pathway; UDP from UMP (UMPK route): step 1/1.</text>
</comment>
<comment type="subunit">
    <text evidence="1">Homohexamer.</text>
</comment>
<comment type="subcellular location">
    <subcellularLocation>
        <location evidence="1">Cytoplasm</location>
    </subcellularLocation>
</comment>
<comment type="similarity">
    <text evidence="1">Belongs to the UMP kinase family.</text>
</comment>
<accession>Q04U70</accession>
<sequence length="246" mass="26801">MGSKYKRILIKLSGEALAGEGEFGIDTNKAHSLAEEIKEVHDLGVEIALVVGGGNIIRGTNLAKVGIDRATADYMGMLATIQNALALQDACEKKGLYTRVQSAIEINSIAESYIRRRAVRHLEKRRIVIFAGGTGNPYFTTDTTASLRAVEVGCDVILKATKVDGVYTADPKKDNGAKRYSQISFMESINRRLKVMDSTALSLCMENNMPIIVFDIFKQGNLKDLVTGKNIGTLISNSEDIQIDGK</sequence>